<sequence>MCGIVGAIRAHHNVVDFLTDGLKRLEYRGYDSSGIAVNTDGKIKRVRRVGRVQLMEDAAREKGISGGIGIGHTRWATHGGVTEPNAHPHISGGMIAVVHNGIIENFESERKRLEGLGYRFESQTDTEVIAHSINHEYAQNGGRLFEAVQEAVKRFHGAYAIAVIAQDKPDELVVARMGCPLLVALGDDETFIASDVSAVIAFTRRVAYLEDGDIALLASDGIKRLTDKNGLPAERKVKVSELSLASLELGLYSHFMQKEIHEQPRAIADTAEVFLDGGFIPENFGKDAKSVFESIRSVKILACGTSYYAALTAKYWLESIAKIPSDVEIASEYRYRSVIADSDQLVITISQSGETLDTMEALKYAKSLGHRHSLSICNVMESALPRESSLVLYTRAGAEIGVASTKAFTTQLVALFGLAVTLAKVRGLVSEEDEARYTEELRQLPGSVQHALNLEPQIAAWAQQFAKKTSALFLGRGIHYPIALEGALKLKEITYIHAEAYPAGELKHGPLALVDENMPVVVIAPNDSLLDKVKANMQEVGARGGELFVFADLDSNFNATEGVHVIRAPRHVGKLSPVVHTIPVQLLAYHTALARGTDVDKPRNLAKSVTVE</sequence>
<reference key="1">
    <citation type="journal article" date="2000" name="Science">
        <title>Complete genome sequence of Neisseria meningitidis serogroup B strain MC58.</title>
        <authorList>
            <person name="Tettelin H."/>
            <person name="Saunders N.J."/>
            <person name="Heidelberg J.F."/>
            <person name="Jeffries A.C."/>
            <person name="Nelson K.E."/>
            <person name="Eisen J.A."/>
            <person name="Ketchum K.A."/>
            <person name="Hood D.W."/>
            <person name="Peden J.F."/>
            <person name="Dodson R.J."/>
            <person name="Nelson W.C."/>
            <person name="Gwinn M.L."/>
            <person name="DeBoy R.T."/>
            <person name="Peterson J.D."/>
            <person name="Hickey E.K."/>
            <person name="Haft D.H."/>
            <person name="Salzberg S.L."/>
            <person name="White O."/>
            <person name="Fleischmann R.D."/>
            <person name="Dougherty B.A."/>
            <person name="Mason T.M."/>
            <person name="Ciecko A."/>
            <person name="Parksey D.S."/>
            <person name="Blair E."/>
            <person name="Cittone H."/>
            <person name="Clark E.B."/>
            <person name="Cotton M.D."/>
            <person name="Utterback T.R."/>
            <person name="Khouri H.M."/>
            <person name="Qin H."/>
            <person name="Vamathevan J.J."/>
            <person name="Gill J."/>
            <person name="Scarlato V."/>
            <person name="Masignani V."/>
            <person name="Pizza M."/>
            <person name="Grandi G."/>
            <person name="Sun L."/>
            <person name="Smith H.O."/>
            <person name="Fraser C.M."/>
            <person name="Moxon E.R."/>
            <person name="Rappuoli R."/>
            <person name="Venter J.C."/>
        </authorList>
    </citation>
    <scope>NUCLEOTIDE SEQUENCE [LARGE SCALE GENOMIC DNA]</scope>
    <source>
        <strain>ATCC BAA-335 / MC58</strain>
    </source>
</reference>
<evidence type="ECO:0000255" key="1">
    <source>
        <dbReference type="HAMAP-Rule" id="MF_00164"/>
    </source>
</evidence>
<accession>Q9K1P9</accession>
<gene>
    <name evidence="1" type="primary">glmS</name>
    <name type="ordered locus">NMB0031</name>
</gene>
<organism>
    <name type="scientific">Neisseria meningitidis serogroup B (strain ATCC BAA-335 / MC58)</name>
    <dbReference type="NCBI Taxonomy" id="122586"/>
    <lineage>
        <taxon>Bacteria</taxon>
        <taxon>Pseudomonadati</taxon>
        <taxon>Pseudomonadota</taxon>
        <taxon>Betaproteobacteria</taxon>
        <taxon>Neisseriales</taxon>
        <taxon>Neisseriaceae</taxon>
        <taxon>Neisseria</taxon>
    </lineage>
</organism>
<dbReference type="EC" id="2.6.1.16" evidence="1"/>
<dbReference type="EMBL" id="AE002098">
    <property type="protein sequence ID" value="AAF40502.1"/>
    <property type="molecule type" value="Genomic_DNA"/>
</dbReference>
<dbReference type="PIR" id="B81246">
    <property type="entry name" value="B81246"/>
</dbReference>
<dbReference type="RefSeq" id="NP_273097.1">
    <property type="nucleotide sequence ID" value="NC_003112.2"/>
</dbReference>
<dbReference type="RefSeq" id="WP_002225764.1">
    <property type="nucleotide sequence ID" value="NC_003112.2"/>
</dbReference>
<dbReference type="SMR" id="Q9K1P9"/>
<dbReference type="FunCoup" id="Q9K1P9">
    <property type="interactions" value="408"/>
</dbReference>
<dbReference type="STRING" id="122586.NMB0031"/>
<dbReference type="PaxDb" id="122586-NMB0031"/>
<dbReference type="KEGG" id="nme:NMB0031"/>
<dbReference type="PATRIC" id="fig|122586.8.peg.42"/>
<dbReference type="HOGENOM" id="CLU_012520_5_2_4"/>
<dbReference type="InParanoid" id="Q9K1P9"/>
<dbReference type="OrthoDB" id="9761808at2"/>
<dbReference type="Proteomes" id="UP000000425">
    <property type="component" value="Chromosome"/>
</dbReference>
<dbReference type="GO" id="GO:0005829">
    <property type="term" value="C:cytosol"/>
    <property type="evidence" value="ECO:0000318"/>
    <property type="project" value="GO_Central"/>
</dbReference>
<dbReference type="GO" id="GO:0097367">
    <property type="term" value="F:carbohydrate derivative binding"/>
    <property type="evidence" value="ECO:0007669"/>
    <property type="project" value="InterPro"/>
</dbReference>
<dbReference type="GO" id="GO:0004360">
    <property type="term" value="F:glutamine-fructose-6-phosphate transaminase (isomerizing) activity"/>
    <property type="evidence" value="ECO:0000318"/>
    <property type="project" value="GO_Central"/>
</dbReference>
<dbReference type="GO" id="GO:0005975">
    <property type="term" value="P:carbohydrate metabolic process"/>
    <property type="evidence" value="ECO:0007669"/>
    <property type="project" value="UniProtKB-UniRule"/>
</dbReference>
<dbReference type="GO" id="GO:0006002">
    <property type="term" value="P:fructose 6-phosphate metabolic process"/>
    <property type="evidence" value="ECO:0000318"/>
    <property type="project" value="GO_Central"/>
</dbReference>
<dbReference type="GO" id="GO:0006487">
    <property type="term" value="P:protein N-linked glycosylation"/>
    <property type="evidence" value="ECO:0000318"/>
    <property type="project" value="GO_Central"/>
</dbReference>
<dbReference type="GO" id="GO:0006047">
    <property type="term" value="P:UDP-N-acetylglucosamine metabolic process"/>
    <property type="evidence" value="ECO:0000318"/>
    <property type="project" value="GO_Central"/>
</dbReference>
<dbReference type="CDD" id="cd00714">
    <property type="entry name" value="GFAT"/>
    <property type="match status" value="1"/>
</dbReference>
<dbReference type="CDD" id="cd05008">
    <property type="entry name" value="SIS_GlmS_GlmD_1"/>
    <property type="match status" value="1"/>
</dbReference>
<dbReference type="CDD" id="cd05009">
    <property type="entry name" value="SIS_GlmS_GlmD_2"/>
    <property type="match status" value="1"/>
</dbReference>
<dbReference type="FunFam" id="3.40.50.10490:FF:000001">
    <property type="entry name" value="Glutamine--fructose-6-phosphate aminotransferase [isomerizing]"/>
    <property type="match status" value="1"/>
</dbReference>
<dbReference type="FunFam" id="3.40.50.10490:FF:000002">
    <property type="entry name" value="Glutamine--fructose-6-phosphate aminotransferase [isomerizing]"/>
    <property type="match status" value="1"/>
</dbReference>
<dbReference type="FunFam" id="3.60.20.10:FF:000006">
    <property type="entry name" value="Glutamine--fructose-6-phosphate aminotransferase [isomerizing]"/>
    <property type="match status" value="1"/>
</dbReference>
<dbReference type="Gene3D" id="3.40.50.10490">
    <property type="entry name" value="Glucose-6-phosphate isomerase like protein, domain 1"/>
    <property type="match status" value="2"/>
</dbReference>
<dbReference type="Gene3D" id="3.60.20.10">
    <property type="entry name" value="Glutamine Phosphoribosylpyrophosphate, subunit 1, domain 1"/>
    <property type="match status" value="1"/>
</dbReference>
<dbReference type="HAMAP" id="MF_00164">
    <property type="entry name" value="GlmS"/>
    <property type="match status" value="1"/>
</dbReference>
<dbReference type="InterPro" id="IPR017932">
    <property type="entry name" value="GATase_2_dom"/>
</dbReference>
<dbReference type="InterPro" id="IPR005855">
    <property type="entry name" value="GFAT"/>
</dbReference>
<dbReference type="InterPro" id="IPR047084">
    <property type="entry name" value="GFAT_N"/>
</dbReference>
<dbReference type="InterPro" id="IPR035466">
    <property type="entry name" value="GlmS/AgaS_SIS"/>
</dbReference>
<dbReference type="InterPro" id="IPR035490">
    <property type="entry name" value="GlmS/FrlB_SIS"/>
</dbReference>
<dbReference type="InterPro" id="IPR029055">
    <property type="entry name" value="Ntn_hydrolases_N"/>
</dbReference>
<dbReference type="InterPro" id="IPR001347">
    <property type="entry name" value="SIS_dom"/>
</dbReference>
<dbReference type="InterPro" id="IPR046348">
    <property type="entry name" value="SIS_dom_sf"/>
</dbReference>
<dbReference type="NCBIfam" id="TIGR01135">
    <property type="entry name" value="glmS"/>
    <property type="match status" value="1"/>
</dbReference>
<dbReference type="NCBIfam" id="NF001484">
    <property type="entry name" value="PRK00331.1"/>
    <property type="match status" value="1"/>
</dbReference>
<dbReference type="PANTHER" id="PTHR10937">
    <property type="entry name" value="GLUCOSAMINE--FRUCTOSE-6-PHOSPHATE AMINOTRANSFERASE, ISOMERIZING"/>
    <property type="match status" value="1"/>
</dbReference>
<dbReference type="PANTHER" id="PTHR10937:SF0">
    <property type="entry name" value="GLUTAMINE--FRUCTOSE-6-PHOSPHATE TRANSAMINASE (ISOMERIZING)"/>
    <property type="match status" value="1"/>
</dbReference>
<dbReference type="Pfam" id="PF13522">
    <property type="entry name" value="GATase_6"/>
    <property type="match status" value="1"/>
</dbReference>
<dbReference type="Pfam" id="PF01380">
    <property type="entry name" value="SIS"/>
    <property type="match status" value="2"/>
</dbReference>
<dbReference type="SUPFAM" id="SSF56235">
    <property type="entry name" value="N-terminal nucleophile aminohydrolases (Ntn hydrolases)"/>
    <property type="match status" value="1"/>
</dbReference>
<dbReference type="SUPFAM" id="SSF53697">
    <property type="entry name" value="SIS domain"/>
    <property type="match status" value="1"/>
</dbReference>
<dbReference type="PROSITE" id="PS51278">
    <property type="entry name" value="GATASE_TYPE_2"/>
    <property type="match status" value="1"/>
</dbReference>
<dbReference type="PROSITE" id="PS51464">
    <property type="entry name" value="SIS"/>
    <property type="match status" value="2"/>
</dbReference>
<protein>
    <recommendedName>
        <fullName evidence="1">Glutamine--fructose-6-phosphate aminotransferase [isomerizing]</fullName>
        <ecNumber evidence="1">2.6.1.16</ecNumber>
    </recommendedName>
    <alternativeName>
        <fullName evidence="1">D-fructose-6-phosphate amidotransferase</fullName>
    </alternativeName>
    <alternativeName>
        <fullName evidence="1">GFAT</fullName>
    </alternativeName>
    <alternativeName>
        <fullName evidence="1">Glucosamine-6-phosphate synthase</fullName>
    </alternativeName>
    <alternativeName>
        <fullName evidence="1">Hexosephosphate aminotransferase</fullName>
    </alternativeName>
    <alternativeName>
        <fullName evidence="1">L-glutamine--D-fructose-6-phosphate amidotransferase</fullName>
    </alternativeName>
</protein>
<feature type="initiator methionine" description="Removed" evidence="1">
    <location>
        <position position="1"/>
    </location>
</feature>
<feature type="chain" id="PRO_0000135361" description="Glutamine--fructose-6-phosphate aminotransferase [isomerizing]">
    <location>
        <begin position="2"/>
        <end position="612"/>
    </location>
</feature>
<feature type="domain" description="Glutamine amidotransferase type-2" evidence="1">
    <location>
        <begin position="2"/>
        <end position="220"/>
    </location>
</feature>
<feature type="domain" description="SIS 1" evidence="1">
    <location>
        <begin position="288"/>
        <end position="428"/>
    </location>
</feature>
<feature type="domain" description="SIS 2" evidence="1">
    <location>
        <begin position="461"/>
        <end position="602"/>
    </location>
</feature>
<feature type="active site" description="Nucleophile; for GATase activity" evidence="1">
    <location>
        <position position="2"/>
    </location>
</feature>
<feature type="active site" description="For Fru-6P isomerization activity" evidence="1">
    <location>
        <position position="607"/>
    </location>
</feature>
<keyword id="KW-0032">Aminotransferase</keyword>
<keyword id="KW-0963">Cytoplasm</keyword>
<keyword id="KW-0315">Glutamine amidotransferase</keyword>
<keyword id="KW-1185">Reference proteome</keyword>
<keyword id="KW-0677">Repeat</keyword>
<keyword id="KW-0808">Transferase</keyword>
<proteinExistence type="inferred from homology"/>
<comment type="function">
    <text evidence="1">Catalyzes the first step in hexosamine metabolism, converting fructose-6P into glucosamine-6P using glutamine as a nitrogen source.</text>
</comment>
<comment type="catalytic activity">
    <reaction evidence="1">
        <text>D-fructose 6-phosphate + L-glutamine = D-glucosamine 6-phosphate + L-glutamate</text>
        <dbReference type="Rhea" id="RHEA:13237"/>
        <dbReference type="ChEBI" id="CHEBI:29985"/>
        <dbReference type="ChEBI" id="CHEBI:58359"/>
        <dbReference type="ChEBI" id="CHEBI:58725"/>
        <dbReference type="ChEBI" id="CHEBI:61527"/>
        <dbReference type="EC" id="2.6.1.16"/>
    </reaction>
</comment>
<comment type="subunit">
    <text evidence="1">Homodimer.</text>
</comment>
<comment type="subcellular location">
    <subcellularLocation>
        <location evidence="1">Cytoplasm</location>
    </subcellularLocation>
</comment>
<name>GLMS_NEIMB</name>